<reference key="1">
    <citation type="submission" date="1997-09" db="EMBL/GenBank/DDBJ databases">
        <title>Ralstonia eutropha H16 urease genes and proteins.</title>
        <authorList>
            <person name="Piettre C."/>
            <person name="Toussaint A."/>
        </authorList>
    </citation>
    <scope>NUCLEOTIDE SEQUENCE [GENOMIC DNA]</scope>
</reference>
<reference key="2">
    <citation type="journal article" date="2006" name="Nat. Biotechnol.">
        <title>Genome sequence of the bioplastic-producing 'Knallgas' bacterium Ralstonia eutropha H16.</title>
        <authorList>
            <person name="Pohlmann A."/>
            <person name="Fricke W.F."/>
            <person name="Reinecke F."/>
            <person name="Kusian B."/>
            <person name="Liesegang H."/>
            <person name="Cramm R."/>
            <person name="Eitinger T."/>
            <person name="Ewering C."/>
            <person name="Poetter M."/>
            <person name="Schwartz E."/>
            <person name="Strittmatter A."/>
            <person name="Voss I."/>
            <person name="Gottschalk G."/>
            <person name="Steinbuechel A."/>
            <person name="Friedrich B."/>
            <person name="Bowien B."/>
        </authorList>
    </citation>
    <scope>NUCLEOTIDE SEQUENCE [LARGE SCALE GENOMIC DNA]</scope>
    <source>
        <strain>ATCC 17699 / DSM 428 / KCTC 22496 / NCIMB 10442 / H16 / Stanier 337</strain>
    </source>
</reference>
<dbReference type="EMBL" id="Y13732">
    <property type="protein sequence ID" value="CAA74066.1"/>
    <property type="molecule type" value="Genomic_DNA"/>
</dbReference>
<dbReference type="EMBL" id="AM260479">
    <property type="protein sequence ID" value="CAJ92226.1"/>
    <property type="molecule type" value="Genomic_DNA"/>
</dbReference>
<dbReference type="RefSeq" id="WP_011614868.1">
    <property type="nucleotide sequence ID" value="NC_008313.1"/>
</dbReference>
<dbReference type="SMR" id="O30338"/>
<dbReference type="STRING" id="381666.H16_A1085"/>
<dbReference type="KEGG" id="reh:H16_A1085"/>
<dbReference type="PATRIC" id="fig|381666.6.peg.1469"/>
<dbReference type="eggNOG" id="COG2371">
    <property type="taxonomic scope" value="Bacteria"/>
</dbReference>
<dbReference type="HOGENOM" id="CLU_093757_0_0_4"/>
<dbReference type="OrthoDB" id="5421304at2"/>
<dbReference type="Proteomes" id="UP000008210">
    <property type="component" value="Chromosome 1"/>
</dbReference>
<dbReference type="GO" id="GO:0005737">
    <property type="term" value="C:cytoplasm"/>
    <property type="evidence" value="ECO:0007669"/>
    <property type="project" value="UniProtKB-SubCell"/>
</dbReference>
<dbReference type="GO" id="GO:0016151">
    <property type="term" value="F:nickel cation binding"/>
    <property type="evidence" value="ECO:0007669"/>
    <property type="project" value="UniProtKB-UniRule"/>
</dbReference>
<dbReference type="GO" id="GO:0051082">
    <property type="term" value="F:unfolded protein binding"/>
    <property type="evidence" value="ECO:0007669"/>
    <property type="project" value="UniProtKB-UniRule"/>
</dbReference>
<dbReference type="GO" id="GO:0006457">
    <property type="term" value="P:protein folding"/>
    <property type="evidence" value="ECO:0007669"/>
    <property type="project" value="InterPro"/>
</dbReference>
<dbReference type="GO" id="GO:0065003">
    <property type="term" value="P:protein-containing complex assembly"/>
    <property type="evidence" value="ECO:0007669"/>
    <property type="project" value="InterPro"/>
</dbReference>
<dbReference type="GO" id="GO:0019627">
    <property type="term" value="P:urea metabolic process"/>
    <property type="evidence" value="ECO:0007669"/>
    <property type="project" value="InterPro"/>
</dbReference>
<dbReference type="CDD" id="cd00571">
    <property type="entry name" value="UreE"/>
    <property type="match status" value="1"/>
</dbReference>
<dbReference type="Gene3D" id="2.60.260.20">
    <property type="entry name" value="Urease metallochaperone UreE, N-terminal domain"/>
    <property type="match status" value="1"/>
</dbReference>
<dbReference type="Gene3D" id="3.30.70.790">
    <property type="entry name" value="UreE, C-terminal domain"/>
    <property type="match status" value="1"/>
</dbReference>
<dbReference type="HAMAP" id="MF_00822">
    <property type="entry name" value="UreE"/>
    <property type="match status" value="1"/>
</dbReference>
<dbReference type="InterPro" id="IPR012406">
    <property type="entry name" value="UreE"/>
</dbReference>
<dbReference type="InterPro" id="IPR007864">
    <property type="entry name" value="UreE_C_dom"/>
</dbReference>
<dbReference type="InterPro" id="IPR004029">
    <property type="entry name" value="UreE_N"/>
</dbReference>
<dbReference type="InterPro" id="IPR036118">
    <property type="entry name" value="UreE_N_sf"/>
</dbReference>
<dbReference type="NCBIfam" id="NF009751">
    <property type="entry name" value="PRK13261.1-1"/>
    <property type="match status" value="1"/>
</dbReference>
<dbReference type="NCBIfam" id="NF009762">
    <property type="entry name" value="PRK13263.1"/>
    <property type="match status" value="1"/>
</dbReference>
<dbReference type="Pfam" id="PF05194">
    <property type="entry name" value="UreE_C"/>
    <property type="match status" value="1"/>
</dbReference>
<dbReference type="Pfam" id="PF02814">
    <property type="entry name" value="UreE_N"/>
    <property type="match status" value="1"/>
</dbReference>
<dbReference type="SMART" id="SM00988">
    <property type="entry name" value="UreE_N"/>
    <property type="match status" value="1"/>
</dbReference>
<dbReference type="SUPFAM" id="SSF69737">
    <property type="entry name" value="Urease metallochaperone UreE, C-terminal domain"/>
    <property type="match status" value="1"/>
</dbReference>
<dbReference type="SUPFAM" id="SSF69287">
    <property type="entry name" value="Urease metallochaperone UreE, N-terminal domain"/>
    <property type="match status" value="1"/>
</dbReference>
<name>UREE_CUPNH</name>
<proteinExistence type="inferred from homology"/>
<evidence type="ECO:0000255" key="1">
    <source>
        <dbReference type="HAMAP-Rule" id="MF_00822"/>
    </source>
</evidence>
<evidence type="ECO:0000256" key="2">
    <source>
        <dbReference type="SAM" id="MobiDB-lite"/>
    </source>
</evidence>
<protein>
    <recommendedName>
        <fullName evidence="1">Urease accessory protein UreE</fullName>
    </recommendedName>
</protein>
<feature type="chain" id="PRO_0000067628" description="Urease accessory protein UreE">
    <location>
        <begin position="1"/>
        <end position="192"/>
    </location>
</feature>
<feature type="region of interest" description="Disordered" evidence="2">
    <location>
        <begin position="170"/>
        <end position="192"/>
    </location>
</feature>
<feature type="compositionally biased region" description="Basic and acidic residues" evidence="2">
    <location>
        <begin position="178"/>
        <end position="192"/>
    </location>
</feature>
<accession>O30338</accession>
<accession>Q0KCP5</accession>
<gene>
    <name evidence="1" type="primary">ureE</name>
    <name type="ordered locus">H16_A1085</name>
</gene>
<keyword id="KW-0143">Chaperone</keyword>
<keyword id="KW-0963">Cytoplasm</keyword>
<keyword id="KW-0533">Nickel</keyword>
<keyword id="KW-0996">Nickel insertion</keyword>
<keyword id="KW-1185">Reference proteome</keyword>
<comment type="function">
    <text evidence="1">Involved in urease metallocenter assembly. Binds nickel. Probably functions as a nickel donor during metallocenter assembly.</text>
</comment>
<comment type="subcellular location">
    <subcellularLocation>
        <location evidence="1">Cytoplasm</location>
    </subcellularLocation>
</comment>
<comment type="similarity">
    <text evidence="1">Belongs to the UreE family.</text>
</comment>
<sequence>MLKIDKLLSAPHGIAPVLVRRAPKLVLPFAERSKSRLRAVLDNGDEAALFLARGTVLRGGDLLVAEDGSFVEVQAAAEAVLEVRAEDPHALMRAAYHLGNRHTPVEIGRDYLRLEYDAVLADMLQRLGVRAERAELPFEPEAGAYGGGHKHGHDATFAEDYAAAQAVFHEHHGHSHSHSHDHVHDEKCGHKH</sequence>
<organism>
    <name type="scientific">Cupriavidus necator (strain ATCC 17699 / DSM 428 / KCTC 22496 / NCIMB 10442 / H16 / Stanier 337)</name>
    <name type="common">Ralstonia eutropha</name>
    <dbReference type="NCBI Taxonomy" id="381666"/>
    <lineage>
        <taxon>Bacteria</taxon>
        <taxon>Pseudomonadati</taxon>
        <taxon>Pseudomonadota</taxon>
        <taxon>Betaproteobacteria</taxon>
        <taxon>Burkholderiales</taxon>
        <taxon>Burkholderiaceae</taxon>
        <taxon>Cupriavidus</taxon>
    </lineage>
</organism>